<feature type="signal peptide" evidence="3">
    <location>
        <begin position="1"/>
        <end position="32"/>
    </location>
</feature>
<feature type="chain" id="PRO_0000019380" description="Sodium/calcium exchanger 1">
    <location>
        <begin position="33"/>
        <end position="970"/>
    </location>
</feature>
<feature type="topological domain" description="Extracellular" evidence="3">
    <location>
        <begin position="33"/>
        <end position="71"/>
    </location>
</feature>
<feature type="transmembrane region" description="Helical" evidence="3">
    <location>
        <begin position="72"/>
        <end position="92"/>
    </location>
</feature>
<feature type="topological domain" description="Cytoplasmic" evidence="3">
    <location>
        <begin position="93"/>
        <end position="133"/>
    </location>
</feature>
<feature type="transmembrane region" description="Helical" evidence="3">
    <location>
        <begin position="134"/>
        <end position="154"/>
    </location>
</feature>
<feature type="topological domain" description="Extracellular" evidence="3">
    <location>
        <begin position="155"/>
        <end position="167"/>
    </location>
</feature>
<feature type="transmembrane region" description="Helical" evidence="3">
    <location>
        <begin position="168"/>
        <end position="188"/>
    </location>
</feature>
<feature type="topological domain" description="Cytoplasmic" evidence="3">
    <location>
        <begin position="189"/>
        <end position="201"/>
    </location>
</feature>
<feature type="transmembrane region" description="Helical" evidence="3">
    <location>
        <begin position="202"/>
        <end position="222"/>
    </location>
</feature>
<feature type="topological domain" description="Extracellular" evidence="3">
    <location>
        <begin position="223"/>
        <end position="228"/>
    </location>
</feature>
<feature type="transmembrane region" description="Helical" evidence="3">
    <location>
        <begin position="229"/>
        <end position="249"/>
    </location>
</feature>
<feature type="topological domain" description="Cytoplasmic" evidence="3">
    <location>
        <begin position="250"/>
        <end position="797"/>
    </location>
</feature>
<feature type="transmembrane region" description="Helical" evidence="3">
    <location>
        <begin position="798"/>
        <end position="818"/>
    </location>
</feature>
<feature type="topological domain" description="Extracellular" evidence="3">
    <location>
        <begin position="819"/>
        <end position="821"/>
    </location>
</feature>
<feature type="transmembrane region" description="Helical" evidence="3">
    <location>
        <begin position="822"/>
        <end position="842"/>
    </location>
</feature>
<feature type="topological domain" description="Cytoplasmic" evidence="3">
    <location>
        <begin position="843"/>
        <end position="871"/>
    </location>
</feature>
<feature type="transmembrane region" description="Helical" evidence="3">
    <location>
        <begin position="872"/>
        <end position="892"/>
    </location>
</feature>
<feature type="topological domain" description="Extracellular" evidence="3">
    <location>
        <begin position="893"/>
        <end position="903"/>
    </location>
</feature>
<feature type="transmembrane region" description="Helical" evidence="3">
    <location>
        <begin position="904"/>
        <end position="924"/>
    </location>
</feature>
<feature type="topological domain" description="Cytoplasmic" evidence="3">
    <location>
        <begin position="925"/>
        <end position="941"/>
    </location>
</feature>
<feature type="transmembrane region" description="Helical" evidence="3">
    <location>
        <begin position="942"/>
        <end position="962"/>
    </location>
</feature>
<feature type="topological domain" description="Extracellular" evidence="3">
    <location>
        <begin position="963"/>
        <end position="970"/>
    </location>
</feature>
<feature type="repeat" description="Alpha-1">
    <location>
        <begin position="138"/>
        <end position="178"/>
    </location>
</feature>
<feature type="domain" description="Calx-beta 1">
    <location>
        <begin position="393"/>
        <end position="493"/>
    </location>
</feature>
<feature type="domain" description="Calx-beta 2">
    <location>
        <begin position="524"/>
        <end position="624"/>
    </location>
</feature>
<feature type="repeat" description="Alpha-2">
    <location>
        <begin position="839"/>
        <end position="875"/>
    </location>
</feature>
<feature type="region of interest" description="Putative calmodulin-binding region" evidence="1">
    <location>
        <begin position="251"/>
        <end position="270"/>
    </location>
</feature>
<feature type="binding site" evidence="1">
    <location>
        <position position="417"/>
    </location>
    <ligand>
        <name>Ca(2+)</name>
        <dbReference type="ChEBI" id="CHEBI:29108"/>
        <label>1</label>
    </ligand>
</feature>
<feature type="binding site" evidence="1">
    <location>
        <position position="417"/>
    </location>
    <ligand>
        <name>Ca(2+)</name>
        <dbReference type="ChEBI" id="CHEBI:29108"/>
        <label>2</label>
    </ligand>
</feature>
<feature type="binding site" evidence="1">
    <location>
        <position position="417"/>
    </location>
    <ligand>
        <name>Ca(2+)</name>
        <dbReference type="ChEBI" id="CHEBI:29108"/>
        <label>3</label>
    </ligand>
</feature>
<feature type="binding site" evidence="1">
    <location>
        <position position="453"/>
    </location>
    <ligand>
        <name>Ca(2+)</name>
        <dbReference type="ChEBI" id="CHEBI:29108"/>
        <label>1</label>
    </ligand>
</feature>
<feature type="binding site" evidence="1">
    <location>
        <position position="453"/>
    </location>
    <ligand>
        <name>Ca(2+)</name>
        <dbReference type="ChEBI" id="CHEBI:29108"/>
        <label>4</label>
    </ligand>
</feature>
<feature type="binding site" evidence="1">
    <location>
        <position position="478"/>
    </location>
    <ligand>
        <name>Ca(2+)</name>
        <dbReference type="ChEBI" id="CHEBI:29108"/>
        <label>2</label>
    </ligand>
</feature>
<feature type="binding site" evidence="1">
    <location>
        <position position="479"/>
    </location>
    <ligand>
        <name>Ca(2+)</name>
        <dbReference type="ChEBI" id="CHEBI:29108"/>
        <label>1</label>
    </ligand>
</feature>
<feature type="binding site" evidence="1">
    <location>
        <position position="479"/>
    </location>
    <ligand>
        <name>Ca(2+)</name>
        <dbReference type="ChEBI" id="CHEBI:29108"/>
        <label>2</label>
    </ligand>
</feature>
<feature type="binding site" evidence="1">
    <location>
        <position position="479"/>
    </location>
    <ligand>
        <name>Ca(2+)</name>
        <dbReference type="ChEBI" id="CHEBI:29108"/>
        <label>3</label>
    </ligand>
</feature>
<feature type="binding site" evidence="1">
    <location>
        <position position="479"/>
    </location>
    <ligand>
        <name>Ca(2+)</name>
        <dbReference type="ChEBI" id="CHEBI:29108"/>
        <label>4</label>
    </ligand>
</feature>
<feature type="binding site" evidence="1">
    <location>
        <position position="481"/>
    </location>
    <ligand>
        <name>Ca(2+)</name>
        <dbReference type="ChEBI" id="CHEBI:29108"/>
        <label>3</label>
    </ligand>
</feature>
<feature type="binding site" evidence="1">
    <location>
        <position position="483"/>
    </location>
    <ligand>
        <name>Ca(2+)</name>
        <dbReference type="ChEBI" id="CHEBI:29108"/>
        <label>1</label>
    </ligand>
</feature>
<feature type="binding site" evidence="1">
    <location>
        <position position="483"/>
    </location>
    <ligand>
        <name>Ca(2+)</name>
        <dbReference type="ChEBI" id="CHEBI:29108"/>
        <label>3</label>
    </ligand>
</feature>
<feature type="binding site" evidence="1">
    <location>
        <position position="483"/>
    </location>
    <ligand>
        <name>Ca(2+)</name>
        <dbReference type="ChEBI" id="CHEBI:29108"/>
        <label>4</label>
    </ligand>
</feature>
<feature type="binding site" evidence="1">
    <location>
        <position position="486"/>
    </location>
    <ligand>
        <name>Ca(2+)</name>
        <dbReference type="ChEBI" id="CHEBI:29108"/>
        <label>4</label>
    </ligand>
</feature>
<feature type="binding site" evidence="1">
    <location>
        <position position="530"/>
    </location>
    <ligand>
        <name>Ca(2+)</name>
        <dbReference type="ChEBI" id="CHEBI:29108"/>
        <label>3</label>
    </ligand>
</feature>
<feature type="binding site" evidence="1">
    <location>
        <position position="531"/>
    </location>
    <ligand>
        <name>Ca(2+)</name>
        <dbReference type="ChEBI" id="CHEBI:29108"/>
        <label>2</label>
    </ligand>
</feature>
<feature type="binding site" evidence="1">
    <location>
        <position position="532"/>
    </location>
    <ligand>
        <name>Ca(2+)</name>
        <dbReference type="ChEBI" id="CHEBI:29108"/>
        <label>2</label>
    </ligand>
</feature>
<feature type="binding site" evidence="1">
    <location>
        <position position="532"/>
    </location>
    <ligand>
        <name>Ca(2+)</name>
        <dbReference type="ChEBI" id="CHEBI:29108"/>
        <label>3</label>
    </ligand>
</feature>
<feature type="binding site" evidence="1">
    <location>
        <position position="548"/>
    </location>
    <ligand>
        <name>Ca(2+)</name>
        <dbReference type="ChEBI" id="CHEBI:29108"/>
        <label>5</label>
    </ligand>
</feature>
<feature type="binding site" evidence="1">
    <location>
        <position position="584"/>
    </location>
    <ligand>
        <name>Ca(2+)</name>
        <dbReference type="ChEBI" id="CHEBI:29108"/>
        <label>6</label>
    </ligand>
</feature>
<feature type="binding site" evidence="1">
    <location>
        <position position="610"/>
    </location>
    <ligand>
        <name>Ca(2+)</name>
        <dbReference type="ChEBI" id="CHEBI:29108"/>
        <label>5</label>
    </ligand>
</feature>
<feature type="binding site" evidence="1">
    <location>
        <position position="610"/>
    </location>
    <ligand>
        <name>Ca(2+)</name>
        <dbReference type="ChEBI" id="CHEBI:29108"/>
        <label>6</label>
    </ligand>
</feature>
<feature type="binding site" evidence="1">
    <location>
        <position position="611"/>
    </location>
    <ligand>
        <name>Ca(2+)</name>
        <dbReference type="ChEBI" id="CHEBI:29108"/>
        <label>6</label>
    </ligand>
</feature>
<feature type="binding site" evidence="1">
    <location>
        <position position="612"/>
    </location>
    <ligand>
        <name>Ca(2+)</name>
        <dbReference type="ChEBI" id="CHEBI:29108"/>
        <label>5</label>
    </ligand>
</feature>
<feature type="binding site" evidence="1">
    <location>
        <position position="612"/>
    </location>
    <ligand>
        <name>Ca(2+)</name>
        <dbReference type="ChEBI" id="CHEBI:29108"/>
        <label>6</label>
    </ligand>
</feature>
<feature type="binding site" evidence="1">
    <location>
        <position position="715"/>
    </location>
    <ligand>
        <name>Ca(2+)</name>
        <dbReference type="ChEBI" id="CHEBI:29108"/>
        <label>5</label>
    </ligand>
</feature>
<feature type="modified residue" description="Phosphoserine" evidence="9">
    <location>
        <position position="282"/>
    </location>
</feature>
<feature type="modified residue" description="Phosphoserine" evidence="9">
    <location>
        <position position="389"/>
    </location>
</feature>
<feature type="glycosylation site" description="N-linked (GlcNAc...) asparagine" evidence="3">
    <location>
        <position position="41"/>
    </location>
</feature>
<feature type="glycosylation site" description="N-linked (GlcNAc...) asparagine" evidence="3">
    <location>
        <position position="157"/>
    </location>
</feature>
<keyword id="KW-0050">Antiport</keyword>
<keyword id="KW-0106">Calcium</keyword>
<keyword id="KW-0109">Calcium transport</keyword>
<keyword id="KW-0112">Calmodulin-binding</keyword>
<keyword id="KW-1003">Cell membrane</keyword>
<keyword id="KW-0325">Glycoprotein</keyword>
<keyword id="KW-0406">Ion transport</keyword>
<keyword id="KW-0472">Membrane</keyword>
<keyword id="KW-0479">Metal-binding</keyword>
<keyword id="KW-0597">Phosphoprotein</keyword>
<keyword id="KW-1185">Reference proteome</keyword>
<keyword id="KW-0677">Repeat</keyword>
<keyword id="KW-0732">Signal</keyword>
<keyword id="KW-0915">Sodium</keyword>
<keyword id="KW-0739">Sodium transport</keyword>
<keyword id="KW-0812">Transmembrane</keyword>
<keyword id="KW-1133">Transmembrane helix</keyword>
<keyword id="KW-0813">Transport</keyword>
<dbReference type="EMBL" id="U70033">
    <property type="protein sequence ID" value="AAB46708.1"/>
    <property type="molecule type" value="mRNA"/>
</dbReference>
<dbReference type="CCDS" id="CCDS37706.1"/>
<dbReference type="RefSeq" id="NP_035536.2">
    <property type="nucleotide sequence ID" value="NM_011406.3"/>
</dbReference>
<dbReference type="SMR" id="P70414"/>
<dbReference type="BioGRID" id="203320">
    <property type="interactions" value="43"/>
</dbReference>
<dbReference type="FunCoup" id="P70414">
    <property type="interactions" value="1859"/>
</dbReference>
<dbReference type="IntAct" id="P70414">
    <property type="interactions" value="16"/>
</dbReference>
<dbReference type="STRING" id="10090.ENSMUSP00000132809"/>
<dbReference type="GlyCosmos" id="P70414">
    <property type="glycosylation" value="2 sites, No reported glycans"/>
</dbReference>
<dbReference type="GlyGen" id="P70414">
    <property type="glycosylation" value="3 sites, 1 N-linked glycan (1 site)"/>
</dbReference>
<dbReference type="iPTMnet" id="P70414"/>
<dbReference type="PhosphoSitePlus" id="P70414"/>
<dbReference type="SwissPalm" id="P70414"/>
<dbReference type="jPOST" id="P70414"/>
<dbReference type="PaxDb" id="10090-ENSMUSP00000083725"/>
<dbReference type="PeptideAtlas" id="P70414"/>
<dbReference type="ProteomicsDB" id="287557"/>
<dbReference type="DNASU" id="20541"/>
<dbReference type="GeneID" id="20541"/>
<dbReference type="KEGG" id="mmu:20541"/>
<dbReference type="AGR" id="MGI:107956"/>
<dbReference type="CTD" id="6546"/>
<dbReference type="MGI" id="MGI:107956">
    <property type="gene designation" value="Slc8a1"/>
</dbReference>
<dbReference type="eggNOG" id="KOG1306">
    <property type="taxonomic scope" value="Eukaryota"/>
</dbReference>
<dbReference type="InParanoid" id="P70414"/>
<dbReference type="OrthoDB" id="418484at2759"/>
<dbReference type="PhylomeDB" id="P70414"/>
<dbReference type="Reactome" id="R-MMU-418359">
    <property type="pathway name" value="Reduction of cytosolic Ca++ levels"/>
</dbReference>
<dbReference type="Reactome" id="R-MMU-425561">
    <property type="pathway name" value="Sodium/Calcium exchangers"/>
</dbReference>
<dbReference type="Reactome" id="R-MMU-5578775">
    <property type="pathway name" value="Ion homeostasis"/>
</dbReference>
<dbReference type="BioGRID-ORCS" id="20541">
    <property type="hits" value="0 hits in 76 CRISPR screens"/>
</dbReference>
<dbReference type="ChiTaRS" id="Slc8a1">
    <property type="organism name" value="mouse"/>
</dbReference>
<dbReference type="PRO" id="PR:P70414"/>
<dbReference type="Proteomes" id="UP000000589">
    <property type="component" value="Unplaced"/>
</dbReference>
<dbReference type="RNAct" id="P70414">
    <property type="molecule type" value="protein"/>
</dbReference>
<dbReference type="GO" id="GO:0043679">
    <property type="term" value="C:axon terminus"/>
    <property type="evidence" value="ECO:0000315"/>
    <property type="project" value="ARUK-UCL"/>
</dbReference>
<dbReference type="GO" id="GO:0016323">
    <property type="term" value="C:basolateral plasma membrane"/>
    <property type="evidence" value="ECO:0000314"/>
    <property type="project" value="MGI"/>
</dbReference>
<dbReference type="GO" id="GO:0016020">
    <property type="term" value="C:membrane"/>
    <property type="evidence" value="ECO:0000314"/>
    <property type="project" value="MGI"/>
</dbReference>
<dbReference type="GO" id="GO:0005886">
    <property type="term" value="C:plasma membrane"/>
    <property type="evidence" value="ECO:0000314"/>
    <property type="project" value="MGI"/>
</dbReference>
<dbReference type="GO" id="GO:0014069">
    <property type="term" value="C:postsynaptic density"/>
    <property type="evidence" value="ECO:0000315"/>
    <property type="project" value="ARUK-UCL"/>
</dbReference>
<dbReference type="GO" id="GO:0042383">
    <property type="term" value="C:sarcolemma"/>
    <property type="evidence" value="ECO:0000314"/>
    <property type="project" value="BHF-UCL"/>
</dbReference>
<dbReference type="GO" id="GO:0045202">
    <property type="term" value="C:synapse"/>
    <property type="evidence" value="ECO:0000314"/>
    <property type="project" value="ARUK-UCL"/>
</dbReference>
<dbReference type="GO" id="GO:0030315">
    <property type="term" value="C:T-tubule"/>
    <property type="evidence" value="ECO:0000314"/>
    <property type="project" value="BHF-UCL"/>
</dbReference>
<dbReference type="GO" id="GO:0030506">
    <property type="term" value="F:ankyrin binding"/>
    <property type="evidence" value="ECO:0000353"/>
    <property type="project" value="BHF-UCL"/>
</dbReference>
<dbReference type="GO" id="GO:0005509">
    <property type="term" value="F:calcium ion binding"/>
    <property type="evidence" value="ECO:0000250"/>
    <property type="project" value="UniProtKB"/>
</dbReference>
<dbReference type="GO" id="GO:0005432">
    <property type="term" value="F:calcium:sodium antiporter activity"/>
    <property type="evidence" value="ECO:0000315"/>
    <property type="project" value="BHF-UCL"/>
</dbReference>
<dbReference type="GO" id="GO:0005516">
    <property type="term" value="F:calmodulin binding"/>
    <property type="evidence" value="ECO:0007669"/>
    <property type="project" value="UniProtKB-KW"/>
</dbReference>
<dbReference type="GO" id="GO:0044325">
    <property type="term" value="F:transmembrane transporter binding"/>
    <property type="evidence" value="ECO:0000353"/>
    <property type="project" value="BHF-UCL"/>
</dbReference>
<dbReference type="GO" id="GO:1901660">
    <property type="term" value="P:calcium ion export"/>
    <property type="evidence" value="ECO:0000315"/>
    <property type="project" value="BHF-UCL"/>
</dbReference>
<dbReference type="GO" id="GO:0055074">
    <property type="term" value="P:calcium ion homeostasis"/>
    <property type="evidence" value="ECO:0000315"/>
    <property type="project" value="BHF-UCL"/>
</dbReference>
<dbReference type="GO" id="GO:0070509">
    <property type="term" value="P:calcium ion import"/>
    <property type="evidence" value="ECO:0000315"/>
    <property type="project" value="BHF-UCL"/>
</dbReference>
<dbReference type="GO" id="GO:0070588">
    <property type="term" value="P:calcium ion transmembrane transport"/>
    <property type="evidence" value="ECO:0000316"/>
    <property type="project" value="UniProtKB"/>
</dbReference>
<dbReference type="GO" id="GO:0006816">
    <property type="term" value="P:calcium ion transport"/>
    <property type="evidence" value="ECO:0000314"/>
    <property type="project" value="MGI"/>
</dbReference>
<dbReference type="GO" id="GO:0060402">
    <property type="term" value="P:calcium ion transport into cytosol"/>
    <property type="evidence" value="ECO:0000315"/>
    <property type="project" value="BHF-UCL"/>
</dbReference>
<dbReference type="GO" id="GO:0055013">
    <property type="term" value="P:cardiac muscle cell development"/>
    <property type="evidence" value="ECO:0000315"/>
    <property type="project" value="BHF-UCL"/>
</dbReference>
<dbReference type="GO" id="GO:0060048">
    <property type="term" value="P:cardiac muscle contraction"/>
    <property type="evidence" value="ECO:0000316"/>
    <property type="project" value="MGI"/>
</dbReference>
<dbReference type="GO" id="GO:0007154">
    <property type="term" value="P:cell communication"/>
    <property type="evidence" value="ECO:0007669"/>
    <property type="project" value="InterPro"/>
</dbReference>
<dbReference type="GO" id="GO:0071313">
    <property type="term" value="P:cellular response to caffeine"/>
    <property type="evidence" value="ECO:0000315"/>
    <property type="project" value="BHF-UCL"/>
</dbReference>
<dbReference type="GO" id="GO:0035050">
    <property type="term" value="P:embryonic heart tube development"/>
    <property type="evidence" value="ECO:0000315"/>
    <property type="project" value="MGI"/>
</dbReference>
<dbReference type="GO" id="GO:0001892">
    <property type="term" value="P:embryonic placenta development"/>
    <property type="evidence" value="ECO:0000315"/>
    <property type="project" value="MGI"/>
</dbReference>
<dbReference type="GO" id="GO:0003007">
    <property type="term" value="P:heart morphogenesis"/>
    <property type="evidence" value="ECO:0000316"/>
    <property type="project" value="MGI"/>
</dbReference>
<dbReference type="GO" id="GO:0055001">
    <property type="term" value="P:muscle cell development"/>
    <property type="evidence" value="ECO:0000316"/>
    <property type="project" value="MGI"/>
</dbReference>
<dbReference type="GO" id="GO:0051481">
    <property type="term" value="P:negative regulation of cytosolic calcium ion concentration"/>
    <property type="evidence" value="ECO:0000315"/>
    <property type="project" value="BHF-UCL"/>
</dbReference>
<dbReference type="GO" id="GO:1902532">
    <property type="term" value="P:negative regulation of intracellular signal transduction"/>
    <property type="evidence" value="ECO:0000315"/>
    <property type="project" value="ARUK-UCL"/>
</dbReference>
<dbReference type="GO" id="GO:0009791">
    <property type="term" value="P:post-embryonic development"/>
    <property type="evidence" value="ECO:0000316"/>
    <property type="project" value="MGI"/>
</dbReference>
<dbReference type="GO" id="GO:0086036">
    <property type="term" value="P:regulation of cardiac muscle cell membrane potential"/>
    <property type="evidence" value="ECO:0000304"/>
    <property type="project" value="BHF-UCL"/>
</dbReference>
<dbReference type="GO" id="GO:0010468">
    <property type="term" value="P:regulation of gene expression"/>
    <property type="evidence" value="ECO:0000315"/>
    <property type="project" value="ARUK-UCL"/>
</dbReference>
<dbReference type="GO" id="GO:0002027">
    <property type="term" value="P:regulation of heart rate"/>
    <property type="evidence" value="ECO:0000315"/>
    <property type="project" value="BHF-UCL"/>
</dbReference>
<dbReference type="GO" id="GO:0002026">
    <property type="term" value="P:regulation of the force of heart contraction"/>
    <property type="evidence" value="ECO:0000315"/>
    <property type="project" value="MGI"/>
</dbReference>
<dbReference type="GO" id="GO:0044557">
    <property type="term" value="P:relaxation of smooth muscle"/>
    <property type="evidence" value="ECO:0000315"/>
    <property type="project" value="BHF-UCL"/>
</dbReference>
<dbReference type="GO" id="GO:0036376">
    <property type="term" value="P:sodium ion export across plasma membrane"/>
    <property type="evidence" value="ECO:0000315"/>
    <property type="project" value="BHF-UCL"/>
</dbReference>
<dbReference type="GO" id="GO:0098719">
    <property type="term" value="P:sodium ion import across plasma membrane"/>
    <property type="evidence" value="ECO:0000315"/>
    <property type="project" value="BHF-UCL"/>
</dbReference>
<dbReference type="GO" id="GO:0006814">
    <property type="term" value="P:sodium ion transport"/>
    <property type="evidence" value="ECO:0000314"/>
    <property type="project" value="MGI"/>
</dbReference>
<dbReference type="GO" id="GO:0014829">
    <property type="term" value="P:vascular associated smooth muscle contraction"/>
    <property type="evidence" value="ECO:0000315"/>
    <property type="project" value="BHF-UCL"/>
</dbReference>
<dbReference type="FunFam" id="1.20.1420.30:FF:000001">
    <property type="entry name" value="sodium/calcium exchanger 1 isoform X1"/>
    <property type="match status" value="1"/>
</dbReference>
<dbReference type="FunFam" id="1.20.1420.30:FF:000003">
    <property type="entry name" value="sodium/calcium exchanger 1 isoform X1"/>
    <property type="match status" value="1"/>
</dbReference>
<dbReference type="FunFam" id="2.60.40.2030:FF:000001">
    <property type="entry name" value="sodium/calcium exchanger 1 isoform X1"/>
    <property type="match status" value="1"/>
</dbReference>
<dbReference type="Gene3D" id="2.60.40.2030">
    <property type="match status" value="2"/>
</dbReference>
<dbReference type="Gene3D" id="1.20.1420.30">
    <property type="entry name" value="NCX, central ion-binding region"/>
    <property type="match status" value="2"/>
</dbReference>
<dbReference type="InterPro" id="IPR051171">
    <property type="entry name" value="CaCA"/>
</dbReference>
<dbReference type="InterPro" id="IPR038081">
    <property type="entry name" value="CalX-like_sf"/>
</dbReference>
<dbReference type="InterPro" id="IPR003644">
    <property type="entry name" value="Calx_beta"/>
</dbReference>
<dbReference type="InterPro" id="IPR001623">
    <property type="entry name" value="DnaJ_domain"/>
</dbReference>
<dbReference type="InterPro" id="IPR004836">
    <property type="entry name" value="Na_Ca_Ex"/>
</dbReference>
<dbReference type="InterPro" id="IPR032452">
    <property type="entry name" value="Na_Ca_Ex_C-exten"/>
</dbReference>
<dbReference type="InterPro" id="IPR002987">
    <property type="entry name" value="NaCa_exhngr1"/>
</dbReference>
<dbReference type="InterPro" id="IPR004837">
    <property type="entry name" value="NaCa_Exmemb"/>
</dbReference>
<dbReference type="InterPro" id="IPR044880">
    <property type="entry name" value="NCX_ion-bd_dom_sf"/>
</dbReference>
<dbReference type="NCBIfam" id="TIGR00845">
    <property type="entry name" value="caca"/>
    <property type="match status" value="1"/>
</dbReference>
<dbReference type="PANTHER" id="PTHR11878">
    <property type="entry name" value="SODIUM/CALCIUM EXCHANGER"/>
    <property type="match status" value="1"/>
</dbReference>
<dbReference type="PANTHER" id="PTHR11878:SF6">
    <property type="entry name" value="SODIUM_CALCIUM EXCHANGER 1"/>
    <property type="match status" value="1"/>
</dbReference>
<dbReference type="Pfam" id="PF03160">
    <property type="entry name" value="Calx-beta"/>
    <property type="match status" value="1"/>
</dbReference>
<dbReference type="Pfam" id="PF01699">
    <property type="entry name" value="Na_Ca_ex"/>
    <property type="match status" value="2"/>
</dbReference>
<dbReference type="Pfam" id="PF16494">
    <property type="entry name" value="Na_Ca_ex_C"/>
    <property type="match status" value="1"/>
</dbReference>
<dbReference type="PRINTS" id="PR01259">
    <property type="entry name" value="NACAEXCHNGR"/>
</dbReference>
<dbReference type="PRINTS" id="PR01260">
    <property type="entry name" value="NACAEXCHNGR1"/>
</dbReference>
<dbReference type="SMART" id="SM00237">
    <property type="entry name" value="Calx_beta"/>
    <property type="match status" value="2"/>
</dbReference>
<dbReference type="SUPFAM" id="SSF141072">
    <property type="entry name" value="CalX-like"/>
    <property type="match status" value="2"/>
</dbReference>
<organism>
    <name type="scientific">Mus musculus</name>
    <name type="common">Mouse</name>
    <dbReference type="NCBI Taxonomy" id="10090"/>
    <lineage>
        <taxon>Eukaryota</taxon>
        <taxon>Metazoa</taxon>
        <taxon>Chordata</taxon>
        <taxon>Craniata</taxon>
        <taxon>Vertebrata</taxon>
        <taxon>Euteleostomi</taxon>
        <taxon>Mammalia</taxon>
        <taxon>Eutheria</taxon>
        <taxon>Euarchontoglires</taxon>
        <taxon>Glires</taxon>
        <taxon>Rodentia</taxon>
        <taxon>Myomorpha</taxon>
        <taxon>Muroidea</taxon>
        <taxon>Muridae</taxon>
        <taxon>Murinae</taxon>
        <taxon>Mus</taxon>
        <taxon>Mus</taxon>
    </lineage>
</organism>
<proteinExistence type="evidence at protein level"/>
<accession>P70414</accession>
<evidence type="ECO:0000250" key="1">
    <source>
        <dbReference type="UniProtKB" id="P23685"/>
    </source>
</evidence>
<evidence type="ECO:0000250" key="2">
    <source>
        <dbReference type="UniProtKB" id="Q01728"/>
    </source>
</evidence>
<evidence type="ECO:0000255" key="3"/>
<evidence type="ECO:0000269" key="4">
    <source>
    </source>
</evidence>
<evidence type="ECO:0000269" key="5">
    <source>
    </source>
</evidence>
<evidence type="ECO:0000269" key="6">
    <source>
    </source>
</evidence>
<evidence type="ECO:0000305" key="7"/>
<evidence type="ECO:0000305" key="8">
    <source>
    </source>
</evidence>
<evidence type="ECO:0007744" key="9">
    <source>
    </source>
</evidence>
<gene>
    <name type="primary">Slc8a1</name>
    <name type="synonym">Ncx</name>
</gene>
<name>NAC1_MOUSE</name>
<protein>
    <recommendedName>
        <fullName>Sodium/calcium exchanger 1</fullName>
    </recommendedName>
    <alternativeName>
        <fullName>Na(+)/Ca(2+)-exchange protein 1</fullName>
    </alternativeName>
    <alternativeName>
        <fullName>Solute carrier family 8 member 1</fullName>
    </alternativeName>
</protein>
<reference key="1">
    <citation type="journal article" date="1996" name="Ann. N. Y. Acad. Sci.">
        <title>Cloning of the mouse cardiac Na(+)-Ca2+ exchanger and functional expression in Xenopus oocytes.</title>
        <authorList>
            <person name="Kim I."/>
            <person name="Lee C.O."/>
        </authorList>
    </citation>
    <scope>NUCLEOTIDE SEQUENCE [MRNA]</scope>
    <scope>FUNCTION</scope>
    <scope>TRANSPORTER ACTIVITY</scope>
    <scope>SUBCELLULAR LOCATION</scope>
    <source>
        <strain>C57BL/6J</strain>
    </source>
</reference>
<reference key="2">
    <citation type="journal article" date="2000" name="J. Biol. Chem.">
        <title>Targeted disruption of Na+/Ca2+ exchanger gene leads to cardiomyocyte apoptosis and defects in heartbeat.</title>
        <authorList>
            <person name="Wakimoto K."/>
            <person name="Kobayashi K."/>
            <person name="Kuro-O M."/>
            <person name="Yao A."/>
            <person name="Iwamoto T."/>
            <person name="Yanaka N."/>
            <person name="Kita S."/>
            <person name="Nishida A."/>
            <person name="Azuma S."/>
            <person name="Toyoda Y."/>
            <person name="Omori K."/>
            <person name="Imahie H."/>
            <person name="Oka T."/>
            <person name="Kudoh S."/>
            <person name="Kohmoto O."/>
            <person name="Yazaki Y."/>
            <person name="Shigekawa M."/>
            <person name="Imai Y."/>
            <person name="Nabeshima Y."/>
            <person name="Komuro I."/>
        </authorList>
    </citation>
    <scope>DISRUPTION PHENOTYPE</scope>
    <scope>FUNCTION</scope>
    <scope>DEVELOPMENTAL STAGE</scope>
</reference>
<reference key="3">
    <citation type="journal article" date="2003" name="Comp. Biochem. Physiol.">
        <title>Na+/Ca2+ exchanger-deficient mice have disorganized myofibrils and swollen mitochondria in cardiomyocytes.</title>
        <authorList>
            <person name="Wakimoto K."/>
            <person name="Fujimura H."/>
            <person name="Iwamoto T."/>
            <person name="Oka T."/>
            <person name="Kobayashi K."/>
            <person name="Kita S."/>
            <person name="Kudoh S."/>
            <person name="Kuro-o M."/>
            <person name="Nabeshima Y."/>
            <person name="Shigekawa M."/>
            <person name="Imai Y."/>
            <person name="Komuro I."/>
        </authorList>
    </citation>
    <scope>DISRUPTION PHENOTYPE</scope>
    <scope>TISSUE SPECIFICITY</scope>
</reference>
<reference key="4">
    <citation type="journal article" date="2010" name="Cell">
        <title>A tissue-specific atlas of mouse protein phosphorylation and expression.</title>
        <authorList>
            <person name="Huttlin E.L."/>
            <person name="Jedrychowski M.P."/>
            <person name="Elias J.E."/>
            <person name="Goswami T."/>
            <person name="Rad R."/>
            <person name="Beausoleil S.A."/>
            <person name="Villen J."/>
            <person name="Haas W."/>
            <person name="Sowa M.E."/>
            <person name="Gygi S.P."/>
        </authorList>
    </citation>
    <scope>PHOSPHORYLATION [LARGE SCALE ANALYSIS] AT SER-282 AND SER-389</scope>
    <scope>IDENTIFICATION BY MASS SPECTROMETRY [LARGE SCALE ANALYSIS]</scope>
    <source>
        <tissue>Brain</tissue>
        <tissue>Heart</tissue>
        <tissue>Kidney</tissue>
        <tissue>Lung</tissue>
        <tissue>Spleen</tissue>
    </source>
</reference>
<reference key="5">
    <citation type="journal article" date="2013" name="Mol. Aspects Med.">
        <title>The SLC8 gene family of sodium-calcium exchangers (NCX) - structure, function, and regulation in health and disease.</title>
        <authorList>
            <person name="Khananshvili D."/>
        </authorList>
    </citation>
    <scope>REVIEW</scope>
</reference>
<sequence>MLRLSLPPNVSMGFRLVALVALLFSHVDHITADTEAETGGNETTECTGSYYCKKGVILPIWEPQDPSFGDKIARATVYFVAMVYMFLGVSIIADRFMSSIEVITSQEKEITIKKPNGETTKTTVRIWNETVSNLTLMALGSSAPEILLSVIEVCGHNFTAGDLGPSTIVGSAAFNMFIIIALCVYVVPDGETRKIKHLRVFFVTAAWSIFAYTWLYIILSVSSPGVVEVWEGLLTFFFFPICVVFAWVADRRLLFYKYVYKRYRAGKQRGMIIEHEGDRPASKTEIEMDGKVVNSHVDNFLDGALVLEVDERDQDDEEARREMARILKELKQKHPEKEIEQLIELANYQVLSQQQKSRAFYRIQATRLMTGAGNILKRHAADQARKAVSMHEVNMEMAENDPVSKIFFEQGTYQCLENCGTVALTIMRRGGDLSTTVFVDFRTEDGTANAASDYEFTEGTVIFKPGETQKEIRVGIIDDDIFEEDENFLVHLSNVRVSSDVSEDGILESNHASSIACLGSPSTATITIFDDDHAGIFTFEEPVTHVSESIGIMEVKVLRTSGARGNVIIPYKTIEGTARGGGEDFEDTCGEPEFQNDEIVKTISVKVIDDEEYEKNKTFFIEIGEPRLVEMSEKKALLLNELGGFTLTGKEMYGQPIFRKVHARDHPIPSTVITISEEYDDKQPLTSKEEEERRIAEMGRPILGEHTKLEVIIQESYEFKSTVDKLIKKTNLALVVGTNSWREQFIEAITVSAGEDDDDDECGEEKLPSCFDYVMHFLTVFWKVLFAFVPPTEYWNGWACFIVSILMIGLLTAFIGDLASHFGCTIGLKDSVTAVVFVALGTSVPDTFASKVAATQDQYADASIGNVTGSNAVNVFLGIGVAWSIAAIYHAANGEQFKVSPGTLAFSVTLFTIFAFINVGVLLYRRRPEIGGELGGPRTAKLLTSSLFVLLWLLYIFFSSLEAYCHIKGF</sequence>
<comment type="function">
    <text evidence="4 6 7">Mediates the exchange of one Ca(2+) ion against three to four Na(+) ions across the cell membrane, and thereby contributes to the regulation of cytoplasmic Ca(2+) levels and Ca(2+)-dependent cellular processes (PubMed:8659820). Contributes to Ca(2+) transport during excitation-contraction coupling in muscle (PubMed:8659820). In a first phase, voltage-gated channels mediate the rapid increase of cytoplasmic Ca(2+) levels due to release of Ca(2+) stores from the endoplasmic reticulum (PubMed:8659820). SLC8A1 mediates the export of Ca(2+) from the cell during the next phase, so that cytoplasmic Ca(2+) levels rapidly return to baseline (PubMed:10967099). Required for normal embryonic heart development and the onset of heart contractions (PubMed:10967099).</text>
</comment>
<comment type="catalytic activity">
    <reaction evidence="8">
        <text>Ca(2+)(in) + 3 Na(+)(out) = Ca(2+)(out) + 3 Na(+)(in)</text>
        <dbReference type="Rhea" id="RHEA:69955"/>
        <dbReference type="ChEBI" id="CHEBI:29101"/>
        <dbReference type="ChEBI" id="CHEBI:29108"/>
    </reaction>
</comment>
<comment type="activity regulation">
    <text evidence="2">Activated by micromolar levels of Ca(2+).</text>
</comment>
<comment type="interaction">
    <interactant intactId="EBI-2312694">
        <id>P70414</id>
    </interactant>
    <interactant intactId="EBI-2312517">
        <id>Q80Z64</id>
        <label>Nanog</label>
    </interactant>
    <organismsDiffer>false</organismsDiffer>
    <experiments>9</experiments>
</comment>
<comment type="interaction">
    <interactant intactId="EBI-2312694">
        <id>P70414</id>
    </interactant>
    <interactant intactId="EBI-2312665">
        <id>Q61066</id>
        <label>Nr0b1</label>
    </interactant>
    <organismsDiffer>false</organismsDiffer>
    <experiments>2</experiments>
</comment>
<comment type="subcellular location">
    <subcellularLocation>
        <location evidence="6">Cell membrane</location>
        <topology evidence="7">Multi-pass membrane protein</topology>
    </subcellularLocation>
</comment>
<comment type="tissue specificity">
    <text evidence="5">Detected in heart, kidney and brain (at protein level).</text>
</comment>
<comment type="developmental stage">
    <text evidence="4">At 9.5 dpc, expression is restricted to the embryonic heart, and is not detectable in any other part of the body.</text>
</comment>
<comment type="domain">
    <text evidence="1">The cytoplasmic Calx-beta domains bind the regulatory Ca(2+). The first Calx-beta domain can bind up to four Ca(2+) ions. The second domain can bind another two Ca(2+) ions that are essential for calcium-regulated ion exchange.</text>
</comment>
<comment type="disruption phenotype">
    <text evidence="4 5">Complete embryonic lethality at about 9.5 dpc. At 9.5 dpc, mutant embryos display strongly decreased body size, an absence of blood vessels in the vitelline sac, and defective heart beat. Contrary to wild type hearts that show regular contractions, about 70% of the mutants have no spontaneous contractions of the heart, and the remainder show only very slow and arrhythmic heart contractions. Mutant hearts have thinner ventricles, contain fewer cardiac myocytes, and display an increased number of apoptotic cells. Mutant hearts do not show fast Ca(2+) transients and display lack of sodium/calcium exchange activity. In mutant hearts, caffeine stimulates normal release of intracellular Ca(2+) stores from the endoplasmic reticulum into the cytoplasm, but the subsequent decrease of the high cytoplasmic Ca(2+) levels is impaired (PubMed:10967099). At 9.5 dpc, embryonic cardiomyocytes show severe disorganization of the myofibrils and swollen mitochondria (PubMed:12781968).</text>
</comment>
<comment type="similarity">
    <text evidence="7">Belongs to the Ca(2+):cation antiporter (CaCA) (TC 2.A.19) family. SLC8 subfamily.</text>
</comment>